<dbReference type="EMBL" id="DQ917503">
    <property type="protein sequence ID" value="ABK63532.1"/>
    <property type="molecule type" value="mRNA"/>
</dbReference>
<dbReference type="SMR" id="A8HDJ8"/>
<dbReference type="GO" id="GO:0005576">
    <property type="term" value="C:extracellular region"/>
    <property type="evidence" value="ECO:0007669"/>
    <property type="project" value="UniProtKB-SubCell"/>
</dbReference>
<dbReference type="GO" id="GO:0030550">
    <property type="term" value="F:acetylcholine receptor inhibitor activity"/>
    <property type="evidence" value="ECO:0007669"/>
    <property type="project" value="UniProtKB-KW"/>
</dbReference>
<dbReference type="GO" id="GO:0099106">
    <property type="term" value="F:ion channel regulator activity"/>
    <property type="evidence" value="ECO:0007669"/>
    <property type="project" value="UniProtKB-KW"/>
</dbReference>
<dbReference type="GO" id="GO:0090729">
    <property type="term" value="F:toxin activity"/>
    <property type="evidence" value="ECO:0007669"/>
    <property type="project" value="UniProtKB-KW"/>
</dbReference>
<dbReference type="CDD" id="cd00206">
    <property type="entry name" value="TFP_snake_toxin"/>
    <property type="match status" value="1"/>
</dbReference>
<dbReference type="FunFam" id="2.10.60.10:FF:000024">
    <property type="entry name" value="Cytotoxin 1"/>
    <property type="match status" value="1"/>
</dbReference>
<dbReference type="Gene3D" id="2.10.60.10">
    <property type="entry name" value="CD59"/>
    <property type="match status" value="1"/>
</dbReference>
<dbReference type="InterPro" id="IPR003571">
    <property type="entry name" value="Snake_3FTx"/>
</dbReference>
<dbReference type="InterPro" id="IPR045860">
    <property type="entry name" value="Snake_toxin-like_sf"/>
</dbReference>
<dbReference type="InterPro" id="IPR018354">
    <property type="entry name" value="Snake_toxin_con_site"/>
</dbReference>
<dbReference type="InterPro" id="IPR054131">
    <property type="entry name" value="Toxin_cobra-type"/>
</dbReference>
<dbReference type="Pfam" id="PF21947">
    <property type="entry name" value="Toxin_cobra-type"/>
    <property type="match status" value="1"/>
</dbReference>
<dbReference type="SUPFAM" id="SSF57302">
    <property type="entry name" value="Snake toxin-like"/>
    <property type="match status" value="1"/>
</dbReference>
<dbReference type="PROSITE" id="PS00272">
    <property type="entry name" value="SNAKE_TOXIN"/>
    <property type="match status" value="1"/>
</dbReference>
<organism>
    <name type="scientific">Cryptophis nigrescens</name>
    <name type="common">Eastern small-eyed snake</name>
    <name type="synonym">Rhinoplocephalus nigrescens</name>
    <dbReference type="NCBI Taxonomy" id="292442"/>
    <lineage>
        <taxon>Eukaryota</taxon>
        <taxon>Metazoa</taxon>
        <taxon>Chordata</taxon>
        <taxon>Craniata</taxon>
        <taxon>Vertebrata</taxon>
        <taxon>Euteleostomi</taxon>
        <taxon>Lepidosauria</taxon>
        <taxon>Squamata</taxon>
        <taxon>Bifurcata</taxon>
        <taxon>Unidentata</taxon>
        <taxon>Episquamata</taxon>
        <taxon>Toxicofera</taxon>
        <taxon>Serpentes</taxon>
        <taxon>Colubroidea</taxon>
        <taxon>Elapidae</taxon>
        <taxon>Hydrophiinae</taxon>
        <taxon>Cryptophis</taxon>
    </lineage>
</organism>
<proteinExistence type="inferred from homology"/>
<accession>A8HDJ8</accession>
<keyword id="KW-0008">Acetylcholine receptor inhibiting toxin</keyword>
<keyword id="KW-1015">Disulfide bond</keyword>
<keyword id="KW-0872">Ion channel impairing toxin</keyword>
<keyword id="KW-0528">Neurotoxin</keyword>
<keyword id="KW-0629">Postsynaptic neurotoxin</keyword>
<keyword id="KW-0964">Secreted</keyword>
<keyword id="KW-0732">Signal</keyword>
<keyword id="KW-0800">Toxin</keyword>
<sequence length="81" mass="8916">MKTLLLTLVVVTIVCLDLGYTMTCCNQQSSQPKTITTCAESSCYKKTWKDHHGTRIERGCGCPKVKPGVGLECCKTDECNN</sequence>
<feature type="signal peptide" evidence="1">
    <location>
        <begin position="1"/>
        <end position="21"/>
    </location>
</feature>
<feature type="chain" id="PRO_5000279911" description="Short neurotoxin 2">
    <location>
        <begin position="22"/>
        <end position="81"/>
    </location>
</feature>
<feature type="disulfide bond" evidence="2">
    <location>
        <begin position="24"/>
        <end position="43"/>
    </location>
</feature>
<feature type="disulfide bond" evidence="2">
    <location>
        <begin position="38"/>
        <end position="60"/>
    </location>
</feature>
<feature type="disulfide bond" evidence="2">
    <location>
        <begin position="62"/>
        <end position="73"/>
    </location>
</feature>
<feature type="disulfide bond" evidence="2">
    <location>
        <begin position="74"/>
        <end position="79"/>
    </location>
</feature>
<evidence type="ECO:0000250" key="1"/>
<evidence type="ECO:0000250" key="2">
    <source>
        <dbReference type="UniProtKB" id="P0C1Z0"/>
    </source>
</evidence>
<evidence type="ECO:0000250" key="3">
    <source>
        <dbReference type="UniProtKB" id="P60775"/>
    </source>
</evidence>
<evidence type="ECO:0000305" key="4"/>
<comment type="function">
    <text evidence="3">Binds to muscle nicotinic acetylcholine receptor (nAChR) and inhibit acetylcholine from binding to the receptor, thereby impairing neuromuscular transmission.</text>
</comment>
<comment type="subcellular location">
    <subcellularLocation>
        <location evidence="1">Secreted</location>
    </subcellularLocation>
</comment>
<comment type="tissue specificity">
    <text evidence="4">Expressed by the venom gland.</text>
</comment>
<comment type="similarity">
    <text evidence="4">Belongs to the three-finger toxin family. Short-chain subfamily. Type I alpha-neurotoxin sub-subfamily.</text>
</comment>
<name>3S12_CRYNI</name>
<protein>
    <recommendedName>
        <fullName>Short neurotoxin 2</fullName>
        <shortName>SNTX-2</shortName>
    </recommendedName>
</protein>
<reference key="1">
    <citation type="journal article" date="2007" name="Cell. Mol. Life Sci.">
        <title>Distinct activities of novel neurotoxins from Australian venomous snakes for nicotinic acetylcholine receptors.</title>
        <authorList>
            <person name="St Pierre L."/>
            <person name="Fischer H."/>
            <person name="Adams D.J."/>
            <person name="Schenning M."/>
            <person name="Lavidis N."/>
            <person name="de Jersey J."/>
            <person name="Masci P.P."/>
            <person name="Lavin M.F."/>
        </authorList>
    </citation>
    <scope>NUCLEOTIDE SEQUENCE [MRNA]</scope>
    <source>
        <tissue>Venom gland</tissue>
    </source>
</reference>